<organism>
    <name type="scientific">Listeria monocytogenes serotype 4b (strain F2365)</name>
    <dbReference type="NCBI Taxonomy" id="265669"/>
    <lineage>
        <taxon>Bacteria</taxon>
        <taxon>Bacillati</taxon>
        <taxon>Bacillota</taxon>
        <taxon>Bacilli</taxon>
        <taxon>Bacillales</taxon>
        <taxon>Listeriaceae</taxon>
        <taxon>Listeria</taxon>
    </lineage>
</organism>
<proteinExistence type="inferred from homology"/>
<name>GSA2_LISMF</name>
<accession>Q71YY2</accession>
<evidence type="ECO:0000255" key="1">
    <source>
        <dbReference type="HAMAP-Rule" id="MF_00375"/>
    </source>
</evidence>
<feature type="chain" id="PRO_0000120421" description="Glutamate-1-semialdehyde 2,1-aminomutase 2">
    <location>
        <begin position="1"/>
        <end position="432"/>
    </location>
</feature>
<feature type="modified residue" description="N6-(pyridoxal phosphate)lysine" evidence="1">
    <location>
        <position position="268"/>
    </location>
</feature>
<keyword id="KW-0963">Cytoplasm</keyword>
<keyword id="KW-0413">Isomerase</keyword>
<keyword id="KW-0627">Porphyrin biosynthesis</keyword>
<keyword id="KW-0663">Pyridoxal phosphate</keyword>
<sequence>MDHSMSKKLHDEALLHIVGGVNSPSRSNKGVGGGIPVTMERASGAYFYDVDGNKYIDYLAAFGPIITGHAHPHITEAITKAAQNGVLYGTPTKHEITFAKMLKEAIPSLEKVRFTNSGTEAVMTTIRVARAYTGRDKIIKFAGCYHGHFDLVLVEAGSGPSTLGIPDSAGVTKSTAEEVITVPFNDFASFKEALAVWGDQVAAVLVEPIVGNFGMVAPEDGFLEAVNELAHANGSLVIYDEVITAFRFMYGGAQNYLGVIPDLTAMGKIIGGGLPIGAYGGRIDIMEKVAPLGPAYQAGTHAGNPASILSGIACLEVLQEEGLYERFEKYGSMLKDGIEKAALKHGIAVTVNQIVGALTVYFTEDPVTNYAEAGATNGELFGRFFKGMLEEGINLAPSKYEAWFITSAHSEADILETIQAVDTVFGKMVQDN</sequence>
<reference key="1">
    <citation type="journal article" date="2004" name="Nucleic Acids Res.">
        <title>Whole genome comparisons of serotype 4b and 1/2a strains of the food-borne pathogen Listeria monocytogenes reveal new insights into the core genome components of this species.</title>
        <authorList>
            <person name="Nelson K.E."/>
            <person name="Fouts D.E."/>
            <person name="Mongodin E.F."/>
            <person name="Ravel J."/>
            <person name="DeBoy R.T."/>
            <person name="Kolonay J.F."/>
            <person name="Rasko D.A."/>
            <person name="Angiuoli S.V."/>
            <person name="Gill S.R."/>
            <person name="Paulsen I.T."/>
            <person name="Peterson J.D."/>
            <person name="White O."/>
            <person name="Nelson W.C."/>
            <person name="Nierman W.C."/>
            <person name="Beanan M.J."/>
            <person name="Brinkac L.M."/>
            <person name="Daugherty S.C."/>
            <person name="Dodson R.J."/>
            <person name="Durkin A.S."/>
            <person name="Madupu R."/>
            <person name="Haft D.H."/>
            <person name="Selengut J."/>
            <person name="Van Aken S.E."/>
            <person name="Khouri H.M."/>
            <person name="Fedorova N."/>
            <person name="Forberger H.A."/>
            <person name="Tran B."/>
            <person name="Kathariou S."/>
            <person name="Wonderling L.D."/>
            <person name="Uhlich G.A."/>
            <person name="Bayles D.O."/>
            <person name="Luchansky J.B."/>
            <person name="Fraser C.M."/>
        </authorList>
    </citation>
    <scope>NUCLEOTIDE SEQUENCE [LARGE SCALE GENOMIC DNA]</scope>
    <source>
        <strain>F2365</strain>
    </source>
</reference>
<dbReference type="EC" id="5.4.3.8" evidence="1"/>
<dbReference type="EMBL" id="AE017262">
    <property type="protein sequence ID" value="AAT04482.1"/>
    <property type="molecule type" value="Genomic_DNA"/>
</dbReference>
<dbReference type="RefSeq" id="WP_003728266.1">
    <property type="nucleotide sequence ID" value="NC_002973.6"/>
</dbReference>
<dbReference type="SMR" id="Q71YY2"/>
<dbReference type="KEGG" id="lmf:LMOf2365_1709"/>
<dbReference type="HOGENOM" id="CLU_016922_1_5_9"/>
<dbReference type="UniPathway" id="UPA00251">
    <property type="reaction ID" value="UER00317"/>
</dbReference>
<dbReference type="GO" id="GO:0005737">
    <property type="term" value="C:cytoplasm"/>
    <property type="evidence" value="ECO:0007669"/>
    <property type="project" value="UniProtKB-SubCell"/>
</dbReference>
<dbReference type="GO" id="GO:0042286">
    <property type="term" value="F:glutamate-1-semialdehyde 2,1-aminomutase activity"/>
    <property type="evidence" value="ECO:0007669"/>
    <property type="project" value="UniProtKB-UniRule"/>
</dbReference>
<dbReference type="GO" id="GO:0030170">
    <property type="term" value="F:pyridoxal phosphate binding"/>
    <property type="evidence" value="ECO:0007669"/>
    <property type="project" value="InterPro"/>
</dbReference>
<dbReference type="GO" id="GO:0008483">
    <property type="term" value="F:transaminase activity"/>
    <property type="evidence" value="ECO:0007669"/>
    <property type="project" value="InterPro"/>
</dbReference>
<dbReference type="GO" id="GO:0006782">
    <property type="term" value="P:protoporphyrinogen IX biosynthetic process"/>
    <property type="evidence" value="ECO:0007669"/>
    <property type="project" value="UniProtKB-UniRule"/>
</dbReference>
<dbReference type="CDD" id="cd00610">
    <property type="entry name" value="OAT_like"/>
    <property type="match status" value="1"/>
</dbReference>
<dbReference type="FunFam" id="3.40.640.10:FF:000021">
    <property type="entry name" value="Glutamate-1-semialdehyde 2,1-aminomutase"/>
    <property type="match status" value="1"/>
</dbReference>
<dbReference type="Gene3D" id="3.90.1150.10">
    <property type="entry name" value="Aspartate Aminotransferase, domain 1"/>
    <property type="match status" value="1"/>
</dbReference>
<dbReference type="Gene3D" id="3.40.640.10">
    <property type="entry name" value="Type I PLP-dependent aspartate aminotransferase-like (Major domain)"/>
    <property type="match status" value="1"/>
</dbReference>
<dbReference type="HAMAP" id="MF_00375">
    <property type="entry name" value="HemL_aminotrans_3"/>
    <property type="match status" value="1"/>
</dbReference>
<dbReference type="InterPro" id="IPR004639">
    <property type="entry name" value="4pyrrol_synth_GluAld_NH2Trfase"/>
</dbReference>
<dbReference type="InterPro" id="IPR005814">
    <property type="entry name" value="Aminotrans_3"/>
</dbReference>
<dbReference type="InterPro" id="IPR049704">
    <property type="entry name" value="Aminotrans_3_PPA_site"/>
</dbReference>
<dbReference type="InterPro" id="IPR015424">
    <property type="entry name" value="PyrdxlP-dep_Trfase"/>
</dbReference>
<dbReference type="InterPro" id="IPR015421">
    <property type="entry name" value="PyrdxlP-dep_Trfase_major"/>
</dbReference>
<dbReference type="InterPro" id="IPR015422">
    <property type="entry name" value="PyrdxlP-dep_Trfase_small"/>
</dbReference>
<dbReference type="NCBIfam" id="TIGR00713">
    <property type="entry name" value="hemL"/>
    <property type="match status" value="1"/>
</dbReference>
<dbReference type="NCBIfam" id="NF000818">
    <property type="entry name" value="PRK00062.1"/>
    <property type="match status" value="1"/>
</dbReference>
<dbReference type="NCBIfam" id="NF009055">
    <property type="entry name" value="PRK12389.1"/>
    <property type="match status" value="1"/>
</dbReference>
<dbReference type="PANTHER" id="PTHR43713">
    <property type="entry name" value="GLUTAMATE-1-SEMIALDEHYDE 2,1-AMINOMUTASE"/>
    <property type="match status" value="1"/>
</dbReference>
<dbReference type="PANTHER" id="PTHR43713:SF1">
    <property type="entry name" value="GLUTAMATE-1-SEMIALDEHYDE 2,1-AMINOMUTASE 2"/>
    <property type="match status" value="1"/>
</dbReference>
<dbReference type="Pfam" id="PF00202">
    <property type="entry name" value="Aminotran_3"/>
    <property type="match status" value="1"/>
</dbReference>
<dbReference type="SUPFAM" id="SSF53383">
    <property type="entry name" value="PLP-dependent transferases"/>
    <property type="match status" value="1"/>
</dbReference>
<dbReference type="PROSITE" id="PS00600">
    <property type="entry name" value="AA_TRANSFER_CLASS_3"/>
    <property type="match status" value="1"/>
</dbReference>
<gene>
    <name evidence="1" type="primary">hemL2</name>
    <name type="synonym">gsaB</name>
    <name type="ordered locus">LMOf2365_1709</name>
</gene>
<protein>
    <recommendedName>
        <fullName evidence="1">Glutamate-1-semialdehyde 2,1-aminomutase 2</fullName>
        <shortName evidence="1">GSA 2</shortName>
        <ecNumber evidence="1">5.4.3.8</ecNumber>
    </recommendedName>
    <alternativeName>
        <fullName evidence="1">Glutamate-1-semialdehyde aminotransferase 2</fullName>
        <shortName evidence="1">GSA-AT 2</shortName>
    </alternativeName>
</protein>
<comment type="catalytic activity">
    <reaction evidence="1">
        <text>(S)-4-amino-5-oxopentanoate = 5-aminolevulinate</text>
        <dbReference type="Rhea" id="RHEA:14265"/>
        <dbReference type="ChEBI" id="CHEBI:57501"/>
        <dbReference type="ChEBI" id="CHEBI:356416"/>
        <dbReference type="EC" id="5.4.3.8"/>
    </reaction>
</comment>
<comment type="cofactor">
    <cofactor evidence="1">
        <name>pyridoxal 5'-phosphate</name>
        <dbReference type="ChEBI" id="CHEBI:597326"/>
    </cofactor>
</comment>
<comment type="pathway">
    <text evidence="1">Porphyrin-containing compound metabolism; protoporphyrin-IX biosynthesis; 5-aminolevulinate from L-glutamyl-tRNA(Glu): step 2/2.</text>
</comment>
<comment type="subunit">
    <text evidence="1">Homodimer.</text>
</comment>
<comment type="subcellular location">
    <subcellularLocation>
        <location evidence="1">Cytoplasm</location>
    </subcellularLocation>
</comment>
<comment type="similarity">
    <text evidence="1">Belongs to the class-III pyridoxal-phosphate-dependent aminotransferase family. HemL subfamily.</text>
</comment>